<name>RAE1_DROME</name>
<gene>
    <name evidence="7 10" type="primary">Rae1</name>
    <name evidence="10" type="ORF">CG9862</name>
</gene>
<reference evidence="11" key="1">
    <citation type="journal article" date="2000" name="Science">
        <title>The genome sequence of Drosophila melanogaster.</title>
        <authorList>
            <person name="Adams M.D."/>
            <person name="Celniker S.E."/>
            <person name="Holt R.A."/>
            <person name="Evans C.A."/>
            <person name="Gocayne J.D."/>
            <person name="Amanatides P.G."/>
            <person name="Scherer S.E."/>
            <person name="Li P.W."/>
            <person name="Hoskins R.A."/>
            <person name="Galle R.F."/>
            <person name="George R.A."/>
            <person name="Lewis S.E."/>
            <person name="Richards S."/>
            <person name="Ashburner M."/>
            <person name="Henderson S.N."/>
            <person name="Sutton G.G."/>
            <person name="Wortman J.R."/>
            <person name="Yandell M.D."/>
            <person name="Zhang Q."/>
            <person name="Chen L.X."/>
            <person name="Brandon R.C."/>
            <person name="Rogers Y.-H.C."/>
            <person name="Blazej R.G."/>
            <person name="Champe M."/>
            <person name="Pfeiffer B.D."/>
            <person name="Wan K.H."/>
            <person name="Doyle C."/>
            <person name="Baxter E.G."/>
            <person name="Helt G."/>
            <person name="Nelson C.R."/>
            <person name="Miklos G.L.G."/>
            <person name="Abril J.F."/>
            <person name="Agbayani A."/>
            <person name="An H.-J."/>
            <person name="Andrews-Pfannkoch C."/>
            <person name="Baldwin D."/>
            <person name="Ballew R.M."/>
            <person name="Basu A."/>
            <person name="Baxendale J."/>
            <person name="Bayraktaroglu L."/>
            <person name="Beasley E.M."/>
            <person name="Beeson K.Y."/>
            <person name="Benos P.V."/>
            <person name="Berman B.P."/>
            <person name="Bhandari D."/>
            <person name="Bolshakov S."/>
            <person name="Borkova D."/>
            <person name="Botchan M.R."/>
            <person name="Bouck J."/>
            <person name="Brokstein P."/>
            <person name="Brottier P."/>
            <person name="Burtis K.C."/>
            <person name="Busam D.A."/>
            <person name="Butler H."/>
            <person name="Cadieu E."/>
            <person name="Center A."/>
            <person name="Chandra I."/>
            <person name="Cherry J.M."/>
            <person name="Cawley S."/>
            <person name="Dahlke C."/>
            <person name="Davenport L.B."/>
            <person name="Davies P."/>
            <person name="de Pablos B."/>
            <person name="Delcher A."/>
            <person name="Deng Z."/>
            <person name="Mays A.D."/>
            <person name="Dew I."/>
            <person name="Dietz S.M."/>
            <person name="Dodson K."/>
            <person name="Doup L.E."/>
            <person name="Downes M."/>
            <person name="Dugan-Rocha S."/>
            <person name="Dunkov B.C."/>
            <person name="Dunn P."/>
            <person name="Durbin K.J."/>
            <person name="Evangelista C.C."/>
            <person name="Ferraz C."/>
            <person name="Ferriera S."/>
            <person name="Fleischmann W."/>
            <person name="Fosler C."/>
            <person name="Gabrielian A.E."/>
            <person name="Garg N.S."/>
            <person name="Gelbart W.M."/>
            <person name="Glasser K."/>
            <person name="Glodek A."/>
            <person name="Gong F."/>
            <person name="Gorrell J.H."/>
            <person name="Gu Z."/>
            <person name="Guan P."/>
            <person name="Harris M."/>
            <person name="Harris N.L."/>
            <person name="Harvey D.A."/>
            <person name="Heiman T.J."/>
            <person name="Hernandez J.R."/>
            <person name="Houck J."/>
            <person name="Hostin D."/>
            <person name="Houston K.A."/>
            <person name="Howland T.J."/>
            <person name="Wei M.-H."/>
            <person name="Ibegwam C."/>
            <person name="Jalali M."/>
            <person name="Kalush F."/>
            <person name="Karpen G.H."/>
            <person name="Ke Z."/>
            <person name="Kennison J.A."/>
            <person name="Ketchum K.A."/>
            <person name="Kimmel B.E."/>
            <person name="Kodira C.D."/>
            <person name="Kraft C.L."/>
            <person name="Kravitz S."/>
            <person name="Kulp D."/>
            <person name="Lai Z."/>
            <person name="Lasko P."/>
            <person name="Lei Y."/>
            <person name="Levitsky A.A."/>
            <person name="Li J.H."/>
            <person name="Li Z."/>
            <person name="Liang Y."/>
            <person name="Lin X."/>
            <person name="Liu X."/>
            <person name="Mattei B."/>
            <person name="McIntosh T.C."/>
            <person name="McLeod M.P."/>
            <person name="McPherson D."/>
            <person name="Merkulov G."/>
            <person name="Milshina N.V."/>
            <person name="Mobarry C."/>
            <person name="Morris J."/>
            <person name="Moshrefi A."/>
            <person name="Mount S.M."/>
            <person name="Moy M."/>
            <person name="Murphy B."/>
            <person name="Murphy L."/>
            <person name="Muzny D.M."/>
            <person name="Nelson D.L."/>
            <person name="Nelson D.R."/>
            <person name="Nelson K.A."/>
            <person name="Nixon K."/>
            <person name="Nusskern D.R."/>
            <person name="Pacleb J.M."/>
            <person name="Palazzolo M."/>
            <person name="Pittman G.S."/>
            <person name="Pan S."/>
            <person name="Pollard J."/>
            <person name="Puri V."/>
            <person name="Reese M.G."/>
            <person name="Reinert K."/>
            <person name="Remington K."/>
            <person name="Saunders R.D.C."/>
            <person name="Scheeler F."/>
            <person name="Shen H."/>
            <person name="Shue B.C."/>
            <person name="Siden-Kiamos I."/>
            <person name="Simpson M."/>
            <person name="Skupski M.P."/>
            <person name="Smith T.J."/>
            <person name="Spier E."/>
            <person name="Spradling A.C."/>
            <person name="Stapleton M."/>
            <person name="Strong R."/>
            <person name="Sun E."/>
            <person name="Svirskas R."/>
            <person name="Tector C."/>
            <person name="Turner R."/>
            <person name="Venter E."/>
            <person name="Wang A.H."/>
            <person name="Wang X."/>
            <person name="Wang Z.-Y."/>
            <person name="Wassarman D.A."/>
            <person name="Weinstock G.M."/>
            <person name="Weissenbach J."/>
            <person name="Williams S.M."/>
            <person name="Woodage T."/>
            <person name="Worley K.C."/>
            <person name="Wu D."/>
            <person name="Yang S."/>
            <person name="Yao Q.A."/>
            <person name="Ye J."/>
            <person name="Yeh R.-F."/>
            <person name="Zaveri J.S."/>
            <person name="Zhan M."/>
            <person name="Zhang G."/>
            <person name="Zhao Q."/>
            <person name="Zheng L."/>
            <person name="Zheng X.H."/>
            <person name="Zhong F.N."/>
            <person name="Zhong W."/>
            <person name="Zhou X."/>
            <person name="Zhu S.C."/>
            <person name="Zhu X."/>
            <person name="Smith H.O."/>
            <person name="Gibbs R.A."/>
            <person name="Myers E.W."/>
            <person name="Rubin G.M."/>
            <person name="Venter J.C."/>
        </authorList>
    </citation>
    <scope>NUCLEOTIDE SEQUENCE [LARGE SCALE GENOMIC DNA]</scope>
    <source>
        <strain evidence="11">Berkeley</strain>
    </source>
</reference>
<reference evidence="11" key="2">
    <citation type="journal article" date="2002" name="Genome Biol.">
        <title>Annotation of the Drosophila melanogaster euchromatic genome: a systematic review.</title>
        <authorList>
            <person name="Misra S."/>
            <person name="Crosby M.A."/>
            <person name="Mungall C.J."/>
            <person name="Matthews B.B."/>
            <person name="Campbell K.S."/>
            <person name="Hradecky P."/>
            <person name="Huang Y."/>
            <person name="Kaminker J.S."/>
            <person name="Millburn G.H."/>
            <person name="Prochnik S.E."/>
            <person name="Smith C.D."/>
            <person name="Tupy J.L."/>
            <person name="Whitfield E.J."/>
            <person name="Bayraktaroglu L."/>
            <person name="Berman B.P."/>
            <person name="Bettencourt B.R."/>
            <person name="Celniker S.E."/>
            <person name="de Grey A.D.N.J."/>
            <person name="Drysdale R.A."/>
            <person name="Harris N.L."/>
            <person name="Richter J."/>
            <person name="Russo S."/>
            <person name="Schroeder A.J."/>
            <person name="Shu S.Q."/>
            <person name="Stapleton M."/>
            <person name="Yamada C."/>
            <person name="Ashburner M."/>
            <person name="Gelbart W.M."/>
            <person name="Rubin G.M."/>
            <person name="Lewis S.E."/>
        </authorList>
    </citation>
    <scope>GENOME REANNOTATION</scope>
    <source>
        <strain evidence="11">Berkeley</strain>
    </source>
</reference>
<reference evidence="9" key="3">
    <citation type="submission" date="2003-01" db="EMBL/GenBank/DDBJ databases">
        <authorList>
            <person name="Stapleton M."/>
            <person name="Brokstein P."/>
            <person name="Hong L."/>
            <person name="Agbayani A."/>
            <person name="Carlson J."/>
            <person name="Champe M."/>
            <person name="Chavez C."/>
            <person name="Dorsett V."/>
            <person name="Dresnek D."/>
            <person name="Farfan D."/>
            <person name="Frise E."/>
            <person name="George R."/>
            <person name="Gonzalez M."/>
            <person name="Guarin H."/>
            <person name="Kronmiller B."/>
            <person name="Li P."/>
            <person name="Liao G."/>
            <person name="Miranda A."/>
            <person name="Mungall C.J."/>
            <person name="Nunoo J."/>
            <person name="Pacleb J."/>
            <person name="Paragas V."/>
            <person name="Park S."/>
            <person name="Patel S."/>
            <person name="Phouanenavong S."/>
            <person name="Wan K."/>
            <person name="Yu C."/>
            <person name="Lewis S.E."/>
            <person name="Rubin G.M."/>
            <person name="Celniker S."/>
        </authorList>
    </citation>
    <scope>NUCLEOTIDE SEQUENCE [LARGE SCALE MRNA]</scope>
    <source>
        <strain evidence="9">Berkeley</strain>
        <tissue evidence="9">Embryo</tissue>
    </source>
</reference>
<reference evidence="8" key="4">
    <citation type="journal article" date="2004" name="Gene">
        <title>Characterization of the Drosophila Rae1 protein as a G1 phase regulator of the cell cycle.</title>
        <authorList>
            <person name="Sitterlin D."/>
        </authorList>
    </citation>
    <scope>FUNCTION</scope>
    <scope>SUBCELLULAR LOCATION</scope>
</reference>
<reference evidence="8" key="5">
    <citation type="journal article" date="2011" name="Nat. Neurosci.">
        <title>Drosophila Rae1 controls the abundance of the ubiquitin ligase Highwire in post-mitotic neurons.</title>
        <authorList>
            <person name="Tian X."/>
            <person name="Li J."/>
            <person name="Valakh V."/>
            <person name="DiAntonio A."/>
            <person name="Wu C."/>
        </authorList>
    </citation>
    <scope>FUNCTION</scope>
    <scope>IDENTIFICATION IN A COMPLEX WITH FSN AND HIW</scope>
    <scope>INTERACTION WITH HIW AND NUP98-96</scope>
    <scope>TISSUE SPECIFICITY</scope>
    <scope>DEVELOPMENTAL STAGE</scope>
    <scope>IDENTIFICATION BY MASS SPECTROMETRY</scope>
</reference>
<reference evidence="8" key="6">
    <citation type="journal article" date="2013" name="J. Cell Sci.">
        <title>Drosophila rae1 is required for male meiosis and spermatogenesis.</title>
        <authorList>
            <person name="Volpi S."/>
            <person name="Bongiorni S."/>
            <person name="Fabbretti F."/>
            <person name="Wakimoto B.T."/>
            <person name="Prantera G."/>
        </authorList>
    </citation>
    <scope>FUNCTION</scope>
    <scope>SUBCELLULAR LOCATION</scope>
    <scope>DISRUPTION PHENOTYPE</scope>
    <scope>MUTAGENESIS OF GLY-129</scope>
</reference>
<reference evidence="8" key="7">
    <citation type="journal article" date="2016" name="PLoS Genet.">
        <title>The Hippo Pathway Targets Rae1 to Regulate Mitosis and Organ Size and to Feed Back to Regulate Upstream Components Merlin, Hippo, and Warts.</title>
        <authorList>
            <person name="Jahanshahi M."/>
            <person name="Hsiao K."/>
            <person name="Jenny A."/>
            <person name="Pfleger C.M."/>
        </authorList>
    </citation>
    <scope>FUNCTION</scope>
    <scope>SUBCELLULAR LOCATION</scope>
    <scope>DISRUPTION PHENOTYPE</scope>
</reference>
<reference evidence="8" key="8">
    <citation type="journal article" date="2017" name="Biochim. Biophys. Acta">
        <title>The actin binding cytoskeletal protein Moesin is involved in nuclear mRNA export.</title>
        <authorList>
            <person name="Kristo I."/>
            <person name="Bajusz C."/>
            <person name="Borsos B.N."/>
            <person name="Pankotai T."/>
            <person name="Dopie J."/>
            <person name="Jankovics F."/>
            <person name="Vartiainen M.K."/>
            <person name="Erdelyi M."/>
            <person name="Vilmos P."/>
        </authorList>
    </citation>
    <scope>FUNCTION</scope>
    <scope>INTERACTION WITH NUP98-96</scope>
    <scope>SUBCELLULAR LOCATION</scope>
</reference>
<organism evidence="11">
    <name type="scientific">Drosophila melanogaster</name>
    <name type="common">Fruit fly</name>
    <dbReference type="NCBI Taxonomy" id="7227"/>
    <lineage>
        <taxon>Eukaryota</taxon>
        <taxon>Metazoa</taxon>
        <taxon>Ecdysozoa</taxon>
        <taxon>Arthropoda</taxon>
        <taxon>Hexapoda</taxon>
        <taxon>Insecta</taxon>
        <taxon>Pterygota</taxon>
        <taxon>Neoptera</taxon>
        <taxon>Endopterygota</taxon>
        <taxon>Diptera</taxon>
        <taxon>Brachycera</taxon>
        <taxon>Muscomorpha</taxon>
        <taxon>Ephydroidea</taxon>
        <taxon>Drosophilidae</taxon>
        <taxon>Drosophila</taxon>
        <taxon>Sophophora</taxon>
    </lineage>
</organism>
<sequence length="346" mass="38618">MFGATQSTNRMNDFEVASPPDDSVSALEFSPSTVQKNFLVAGSWDSTVRCWEVEQNGATVPKSMKTMGGPVLDVCWSDDGSKVFVASCDKQVKLWDLASDQVMQVAAHDGPVKTCHMVKGPTYTCLMTGSWDKTLKFWDTRSPNPMMTINLPERCYCADVEYPMAVVGTANRGLIIYSLQNSPTEYKRQESPLKYQHRAISIFRDKKKEPTGCALGSIEGRVAIQYVNPGNPKDNFTFKCHRTTGTSGYQDIYAVNDIAFHPVHGTLVTVGSDGTFSFWDKDARTKLKSSETMDQSITKCGFNANGQIFAYAVGYDWSKGHEYFNPAKKPQIFLRSCYDELKPRIN</sequence>
<proteinExistence type="evidence at protein level"/>
<accession>Q9W2E7</accession>
<accession>Q7JVX4</accession>
<dbReference type="EMBL" id="AE013599">
    <property type="protein sequence ID" value="AAF46745.1"/>
    <property type="molecule type" value="Genomic_DNA"/>
</dbReference>
<dbReference type="EMBL" id="AY118568">
    <property type="protein sequence ID" value="AAM49937.2"/>
    <property type="status" value="ALT_INIT"/>
    <property type="molecule type" value="mRNA"/>
</dbReference>
<dbReference type="RefSeq" id="NP_611597.1">
    <property type="nucleotide sequence ID" value="NM_137753.3"/>
</dbReference>
<dbReference type="SMR" id="Q9W2E7"/>
<dbReference type="ComplexPortal" id="CPX-2568">
    <property type="entry name" value="Nuclear pore complex"/>
</dbReference>
<dbReference type="FunCoup" id="Q9W2E7">
    <property type="interactions" value="2994"/>
</dbReference>
<dbReference type="IntAct" id="Q9W2E7">
    <property type="interactions" value="25"/>
</dbReference>
<dbReference type="MINT" id="Q9W2E7"/>
<dbReference type="STRING" id="7227.FBpp0071600"/>
<dbReference type="GlyGen" id="Q9W2E7">
    <property type="glycosylation" value="2 sites, 1 O-linked glycan (2 sites)"/>
</dbReference>
<dbReference type="PaxDb" id="7227-FBpp0071600"/>
<dbReference type="DNASU" id="37467"/>
<dbReference type="EnsemblMetazoa" id="FBtr0071683">
    <property type="protein sequence ID" value="FBpp0071600"/>
    <property type="gene ID" value="FBgn0034646"/>
</dbReference>
<dbReference type="GeneID" id="37467"/>
<dbReference type="KEGG" id="dme:Dmel_CG9862"/>
<dbReference type="UCSC" id="CG9862-RA">
    <property type="organism name" value="d. melanogaster"/>
</dbReference>
<dbReference type="AGR" id="FB:FBgn0034646"/>
<dbReference type="CTD" id="8480"/>
<dbReference type="FlyBase" id="FBgn0034646">
    <property type="gene designation" value="Rae1"/>
</dbReference>
<dbReference type="VEuPathDB" id="VectorBase:FBgn0034646"/>
<dbReference type="eggNOG" id="KOG0647">
    <property type="taxonomic scope" value="Eukaryota"/>
</dbReference>
<dbReference type="GeneTree" id="ENSGT00950000183091"/>
<dbReference type="HOGENOM" id="CLU_038526_1_0_1"/>
<dbReference type="InParanoid" id="Q9W2E7"/>
<dbReference type="OMA" id="EAMDQSI"/>
<dbReference type="OrthoDB" id="256303at2759"/>
<dbReference type="PhylomeDB" id="Q9W2E7"/>
<dbReference type="Reactome" id="R-DME-159227">
    <property type="pathway name" value="Transport of the SLBP independent Mature mRNA"/>
</dbReference>
<dbReference type="Reactome" id="R-DME-159230">
    <property type="pathway name" value="Transport of the SLBP Dependant Mature mRNA"/>
</dbReference>
<dbReference type="Reactome" id="R-DME-159231">
    <property type="pathway name" value="Transport of Mature mRNA Derived from an Intronless Transcript"/>
</dbReference>
<dbReference type="Reactome" id="R-DME-159236">
    <property type="pathway name" value="Transport of Mature mRNA derived from an Intron-Containing Transcript"/>
</dbReference>
<dbReference type="Reactome" id="R-DME-3108214">
    <property type="pathway name" value="SUMOylation of DNA damage response and repair proteins"/>
</dbReference>
<dbReference type="Reactome" id="R-DME-3301854">
    <property type="pathway name" value="Nuclear Pore Complex (NPC) Disassembly"/>
</dbReference>
<dbReference type="Reactome" id="R-DME-4085377">
    <property type="pathway name" value="SUMOylation of SUMOylation proteins"/>
</dbReference>
<dbReference type="Reactome" id="R-DME-4551638">
    <property type="pathway name" value="SUMOylation of chromatin organization proteins"/>
</dbReference>
<dbReference type="Reactome" id="R-DME-4615885">
    <property type="pathway name" value="SUMOylation of DNA replication proteins"/>
</dbReference>
<dbReference type="Reactome" id="R-DME-5578749">
    <property type="pathway name" value="Transcriptional regulation by small RNAs"/>
</dbReference>
<dbReference type="SignaLink" id="Q9W2E7"/>
<dbReference type="BioGRID-ORCS" id="37467">
    <property type="hits" value="1 hit in 1 CRISPR screen"/>
</dbReference>
<dbReference type="GenomeRNAi" id="37467"/>
<dbReference type="PRO" id="PR:Q9W2E7"/>
<dbReference type="Proteomes" id="UP000000803">
    <property type="component" value="Chromosome 2R"/>
</dbReference>
<dbReference type="Bgee" id="FBgn0034646">
    <property type="expression patterns" value="Expressed in secondary oocyte and 73 other cell types or tissues"/>
</dbReference>
<dbReference type="GO" id="GO:0071944">
    <property type="term" value="C:cell periphery"/>
    <property type="evidence" value="ECO:0000314"/>
    <property type="project" value="UniProtKB"/>
</dbReference>
<dbReference type="GO" id="GO:0005694">
    <property type="term" value="C:chromosome"/>
    <property type="evidence" value="ECO:0007669"/>
    <property type="project" value="UniProtKB-SubCell"/>
</dbReference>
<dbReference type="GO" id="GO:0005737">
    <property type="term" value="C:cytoplasm"/>
    <property type="evidence" value="ECO:0000314"/>
    <property type="project" value="UniProtKB"/>
</dbReference>
<dbReference type="GO" id="GO:0016006">
    <property type="term" value="C:Nebenkern"/>
    <property type="evidence" value="ECO:0000314"/>
    <property type="project" value="FlyBase"/>
</dbReference>
<dbReference type="GO" id="GO:0005635">
    <property type="term" value="C:nuclear envelope"/>
    <property type="evidence" value="ECO:0000314"/>
    <property type="project" value="FlyBase"/>
</dbReference>
<dbReference type="GO" id="GO:0005643">
    <property type="term" value="C:nuclear pore"/>
    <property type="evidence" value="ECO:0000353"/>
    <property type="project" value="FlyBase"/>
</dbReference>
<dbReference type="GO" id="GO:0005634">
    <property type="term" value="C:nucleus"/>
    <property type="evidence" value="ECO:0000314"/>
    <property type="project" value="UniProtKB"/>
</dbReference>
<dbReference type="GO" id="GO:0048471">
    <property type="term" value="C:perinuclear region of cytoplasm"/>
    <property type="evidence" value="ECO:0007669"/>
    <property type="project" value="UniProtKB-SubCell"/>
</dbReference>
<dbReference type="GO" id="GO:0036126">
    <property type="term" value="C:sperm flagellum"/>
    <property type="evidence" value="ECO:0000314"/>
    <property type="project" value="FlyBase"/>
</dbReference>
<dbReference type="GO" id="GO:0003723">
    <property type="term" value="F:RNA binding"/>
    <property type="evidence" value="ECO:0000318"/>
    <property type="project" value="GO_Central"/>
</dbReference>
<dbReference type="GO" id="GO:0043130">
    <property type="term" value="F:ubiquitin binding"/>
    <property type="evidence" value="ECO:0000318"/>
    <property type="project" value="GO_Central"/>
</dbReference>
<dbReference type="GO" id="GO:0030154">
    <property type="term" value="P:cell differentiation"/>
    <property type="evidence" value="ECO:0007669"/>
    <property type="project" value="UniProtKB-KW"/>
</dbReference>
<dbReference type="GO" id="GO:0051301">
    <property type="term" value="P:cell division"/>
    <property type="evidence" value="ECO:0007669"/>
    <property type="project" value="UniProtKB-KW"/>
</dbReference>
<dbReference type="GO" id="GO:0035329">
    <property type="term" value="P:hippo signaling"/>
    <property type="evidence" value="ECO:0000315"/>
    <property type="project" value="FlyBase"/>
</dbReference>
<dbReference type="GO" id="GO:0007141">
    <property type="term" value="P:male meiosis I"/>
    <property type="evidence" value="ECO:0000315"/>
    <property type="project" value="FlyBase"/>
</dbReference>
<dbReference type="GO" id="GO:0000278">
    <property type="term" value="P:mitotic cell cycle"/>
    <property type="evidence" value="ECO:0000315"/>
    <property type="project" value="FlyBase"/>
</dbReference>
<dbReference type="GO" id="GO:0045886">
    <property type="term" value="P:negative regulation of synaptic assembly at neuromuscular junction"/>
    <property type="evidence" value="ECO:0000315"/>
    <property type="project" value="FlyBase"/>
</dbReference>
<dbReference type="GO" id="GO:1900087">
    <property type="term" value="P:positive regulation of G1/S transition of mitotic cell cycle"/>
    <property type="evidence" value="ECO:0000315"/>
    <property type="project" value="UniProtKB"/>
</dbReference>
<dbReference type="GO" id="GO:0010628">
    <property type="term" value="P:positive regulation of gene expression"/>
    <property type="evidence" value="ECO:0000315"/>
    <property type="project" value="UniProtKB"/>
</dbReference>
<dbReference type="GO" id="GO:0035332">
    <property type="term" value="P:positive regulation of hippo signaling"/>
    <property type="evidence" value="ECO:0000315"/>
    <property type="project" value="FlyBase"/>
</dbReference>
<dbReference type="GO" id="GO:0010506">
    <property type="term" value="P:regulation of autophagy"/>
    <property type="evidence" value="ECO:0000315"/>
    <property type="project" value="FlyBase"/>
</dbReference>
<dbReference type="GO" id="GO:0042127">
    <property type="term" value="P:regulation of cell population proliferation"/>
    <property type="evidence" value="ECO:0000315"/>
    <property type="project" value="UniProtKB"/>
</dbReference>
<dbReference type="GO" id="GO:0048638">
    <property type="term" value="P:regulation of developmental growth"/>
    <property type="evidence" value="ECO:0000315"/>
    <property type="project" value="UniProtKB"/>
</dbReference>
<dbReference type="GO" id="GO:2000045">
    <property type="term" value="P:regulation of G1/S transition of mitotic cell cycle"/>
    <property type="evidence" value="ECO:0000315"/>
    <property type="project" value="FlyBase"/>
</dbReference>
<dbReference type="GO" id="GO:0035330">
    <property type="term" value="P:regulation of hippo signaling"/>
    <property type="evidence" value="ECO:0000315"/>
    <property type="project" value="UniProtKB"/>
</dbReference>
<dbReference type="GO" id="GO:0006405">
    <property type="term" value="P:RNA export from nucleus"/>
    <property type="evidence" value="ECO:0000318"/>
    <property type="project" value="GO_Central"/>
</dbReference>
<dbReference type="GO" id="GO:0007283">
    <property type="term" value="P:spermatogenesis"/>
    <property type="evidence" value="ECO:0000315"/>
    <property type="project" value="FlyBase"/>
</dbReference>
<dbReference type="GO" id="GO:0000972">
    <property type="term" value="P:transcription-dependent tethering of RNA polymerase II gene DNA at nuclear periphery"/>
    <property type="evidence" value="ECO:0000318"/>
    <property type="project" value="GO_Central"/>
</dbReference>
<dbReference type="FunFam" id="2.130.10.10:FF:000084">
    <property type="entry name" value="mRNA export factor"/>
    <property type="match status" value="1"/>
</dbReference>
<dbReference type="Gene3D" id="2.130.10.10">
    <property type="entry name" value="YVTN repeat-like/Quinoprotein amine dehydrogenase"/>
    <property type="match status" value="1"/>
</dbReference>
<dbReference type="InterPro" id="IPR020472">
    <property type="entry name" value="G-protein_beta_WD-40_rep"/>
</dbReference>
<dbReference type="InterPro" id="IPR015943">
    <property type="entry name" value="WD40/YVTN_repeat-like_dom_sf"/>
</dbReference>
<dbReference type="InterPro" id="IPR019775">
    <property type="entry name" value="WD40_repeat_CS"/>
</dbReference>
<dbReference type="InterPro" id="IPR036322">
    <property type="entry name" value="WD40_repeat_dom_sf"/>
</dbReference>
<dbReference type="InterPro" id="IPR001680">
    <property type="entry name" value="WD40_rpt"/>
</dbReference>
<dbReference type="PANTHER" id="PTHR10971">
    <property type="entry name" value="MRNA EXPORT FACTOR AND BUB3"/>
    <property type="match status" value="1"/>
</dbReference>
<dbReference type="Pfam" id="PF00400">
    <property type="entry name" value="WD40"/>
    <property type="match status" value="4"/>
</dbReference>
<dbReference type="PRINTS" id="PR00320">
    <property type="entry name" value="GPROTEINBRPT"/>
</dbReference>
<dbReference type="SMART" id="SM00320">
    <property type="entry name" value="WD40"/>
    <property type="match status" value="4"/>
</dbReference>
<dbReference type="SUPFAM" id="SSF50978">
    <property type="entry name" value="WD40 repeat-like"/>
    <property type="match status" value="1"/>
</dbReference>
<dbReference type="PROSITE" id="PS00678">
    <property type="entry name" value="WD_REPEATS_1"/>
    <property type="match status" value="1"/>
</dbReference>
<dbReference type="PROSITE" id="PS50082">
    <property type="entry name" value="WD_REPEATS_2"/>
    <property type="match status" value="4"/>
</dbReference>
<dbReference type="PROSITE" id="PS50294">
    <property type="entry name" value="WD_REPEATS_REGION"/>
    <property type="match status" value="1"/>
</dbReference>
<evidence type="ECO:0000255" key="1">
    <source>
        <dbReference type="PROSITE-ProRule" id="PRU00221"/>
    </source>
</evidence>
<evidence type="ECO:0000269" key="2">
    <source>
    </source>
</evidence>
<evidence type="ECO:0000269" key="3">
    <source>
    </source>
</evidence>
<evidence type="ECO:0000269" key="4">
    <source>
    </source>
</evidence>
<evidence type="ECO:0000269" key="5">
    <source>
    </source>
</evidence>
<evidence type="ECO:0000269" key="6">
    <source>
    </source>
</evidence>
<evidence type="ECO:0000303" key="7">
    <source>
    </source>
</evidence>
<evidence type="ECO:0000305" key="8"/>
<evidence type="ECO:0000312" key="9">
    <source>
        <dbReference type="EMBL" id="AAM49937.2"/>
    </source>
</evidence>
<evidence type="ECO:0000312" key="10">
    <source>
        <dbReference type="FlyBase" id="FBgn0034646"/>
    </source>
</evidence>
<evidence type="ECO:0000312" key="11">
    <source>
        <dbReference type="Proteomes" id="UP000000803"/>
    </source>
</evidence>
<keyword id="KW-0131">Cell cycle</keyword>
<keyword id="KW-0132">Cell division</keyword>
<keyword id="KW-0158">Chromosome</keyword>
<keyword id="KW-0963">Cytoplasm</keyword>
<keyword id="KW-0221">Differentiation</keyword>
<keyword id="KW-0469">Meiosis</keyword>
<keyword id="KW-0498">Mitosis</keyword>
<keyword id="KW-0539">Nucleus</keyword>
<keyword id="KW-1185">Reference proteome</keyword>
<keyword id="KW-0677">Repeat</keyword>
<keyword id="KW-0744">Spermatogenesis</keyword>
<keyword id="KW-0813">Transport</keyword>
<keyword id="KW-0853">WD repeat</keyword>
<feature type="chain" id="PRO_0000450094" description="Protein Rae1">
    <location>
        <begin position="1"/>
        <end position="346"/>
    </location>
</feature>
<feature type="repeat" description="WD 1" evidence="1">
    <location>
        <begin position="17"/>
        <end position="61"/>
    </location>
</feature>
<feature type="repeat" description="WD 2" evidence="1">
    <location>
        <begin position="64"/>
        <end position="105"/>
    </location>
</feature>
<feature type="repeat" description="WD 3" evidence="1">
    <location>
        <begin position="126"/>
        <end position="148"/>
    </location>
</feature>
<feature type="repeat" description="WD 4" evidence="1">
    <location>
        <begin position="255"/>
        <end position="289"/>
    </location>
</feature>
<feature type="mutagenesis site" description="Male sterility. Spermatocytes display various defects during early meiotic stages, post-meiotic stages and late spermatogenesis. Defects in early meiotic stages result in karyokinesis and cytokinesis abnormailities and a failure to complete meiosis I. Differentiation arrest prior to spermatid individualization results in seminal vesicles lacking mature sperm." evidence="4">
    <original>G</original>
    <variation>D</variation>
    <location>
        <position position="129"/>
    </location>
</feature>
<protein>
    <recommendedName>
        <fullName evidence="7">Protein Rae1</fullName>
    </recommendedName>
</protein>
<comment type="function">
    <text evidence="2 3 4 5 6">Probable component of the nuclear pore complex (NPC) which regulates the nuclear export of specific mRNAs and promotes cell cycle progression during mitosis and male meiosis (PubMed:14729268, PubMed:23788425, PubMed:27494403). Acts with Nup98-96 to promote the nuclear export of specific mRNAs such as Moe, however it does not appear to be required for general nuclear mRNA transport (PubMed:14729268, PubMed:28554770). Essential mitotic and male meiotic cell cycle regulator with roles in many aspects of the cell cycle including chromatin organization and condensation, spindle assembly, chromosome segregation, and maintaining nuclear structure (PubMed:14729268, PubMed:23788425, PubMed:27494403). During male meiosis it is required for completion of meiosis I, as well as accurate cytokinesis of the secondary spermatocytes, and postmeiotic differentiation of spermatids (PubMed:23788425). Acts as a downstream regulatory target of the Hippo/SWH (Sav/Wts/Hpo) signaling pathway to promote mitotic cell cycle progression and proliferation during wing and eye development, and thereby plays a key role in integrating the regulation of proliferation with organ size control (PubMed:14729268, PubMed:27494403). When the Hippo/SWH signaling pathway is inactive, Rae1 acts independently of yki to increase organ size by promoting mitotic S-phase entry and increase cellular proliferation (PubMed:27494403). When the Hippo/SWH signaling pathway is active it inhibits the activity of Rae1 in a Wts-dependent manner to restrict organ growth (PubMed:27494403). However, Rae1 is also able to negatively regulate the levels and activity of yki likely by activating the core kinases of the Hippo/SWH signaling pathway hpo and Wts and increasing the protein levels of hpo, Mer and Wts; it is therefore likely that it functions as part of a negative feedback loop with the Hippo/SWH signaling pathway to regulate pathway homeostasis and prevent organ overgrowth (PubMed:27494403). Promotes mitotic cell cycle progression, at least in part, by increasing the accumulation of mitotic cyclins such as CycB, possibly by directly up-regulating cyclin transcripts or by inhibiting the anaphase promoting complex/cyclosome (APC/C) activator fzy (PubMed:27494403). Also required in presynaptic, postmitotic motor neurons to restrain synaptic terminal growth (PubMed:21874015). Promotes the expression and stability of the an E3 ubiquitin ligase of hiw, and is likely to function in the regulation of synaptic growth by binding to hiw and protecting it from autophagy-mediated degradation (PubMed:21874015).</text>
</comment>
<comment type="subunit">
    <text evidence="3 6">Interacts with hiw; the interaction with Rae1 may protect hiw from autophagy-mediated degradation (PubMed:21874015). Interacts with Nup98-96 (PubMed:21874015, PubMed:28554770).</text>
</comment>
<comment type="subcellular location">
    <subcellularLocation>
        <location evidence="4 5">Cytoplasm</location>
        <location evidence="4 5">Perinuclear region</location>
    </subcellularLocation>
    <subcellularLocation>
        <location evidence="5">Nucleus</location>
    </subcellularLocation>
    <subcellularLocation>
        <location evidence="2 4">Nucleus envelope</location>
    </subcellularLocation>
    <subcellularLocation>
        <location evidence="4 6">Chromosome</location>
    </subcellularLocation>
    <subcellularLocation>
        <location evidence="4 5">Cytoplasm</location>
    </subcellularLocation>
    <text evidence="4">Dynamic pattern of localization during the spermatocyte cell cycle. Perinuclear in young primary spermatocytes. In late meiotic prophase spermatocytes, localizes to the nucleus where it co-localizes with three major chromatin clumps, and is also associated with puncta in the cytoplasm. In anaphase I and telophase I, occurs at segregating chromatin and mitochondria localized between the two daughter nuclei. In post-meiotic onion stage spermatids, mainly associates with the Nebenkern (a mitochondrial formation in the sperm) but is not detected at the nucleus.</text>
</comment>
<comment type="tissue specificity">
    <text evidence="3">Head (at protein level).</text>
</comment>
<comment type="developmental stage">
    <text evidence="3">Larval brain (at protein level).</text>
</comment>
<comment type="disruption phenotype">
    <text evidence="4 5">Larval lethal (PubMed:27494403). Larvae die at the third-instar stage (PubMed:27494403). RNAi-mediated knockdown in the testes results in male sterility likely due to defects in primary spermatocyte nuclear integrity, meiotic chromosome condensation, segregation, and spindle morphology (PubMed:23788425). These defects lead to a failure to complete meiosis but several aspects of spermatid differentiation can still proceed, including axoneme formation and elongation (PubMed:23788425). RNAi-mediated knockdown in the developing wing or in the proliferating cells of the developing eye, reduces their organ size (PubMed:27494403). RNAi-mediated knockdown in larval neuroblasts results in chromatin undercondensation in metaphase chromosomes (PubMed:23788425). RNAi-mediated knockdown in differentiating eye cells does not result in an obvious phenotype (PubMed:27494403).</text>
</comment>
<comment type="similarity">
    <text evidence="8">Belongs to the WD repeat rae1 family.</text>
</comment>
<comment type="sequence caution" evidence="8">
    <conflict type="erroneous initiation">
        <sequence resource="EMBL-CDS" id="AAM49937"/>
    </conflict>
    <text>Extended N-terminus.</text>
</comment>